<sequence length="158" mass="18793">MFDILMYLFENYVHSEVELLVDEDELTKELTRAGFHQSEILKALTWLERLAELQEGDKPYLCNHDQHSFRIYTKDEMEKLDVECRGFLLFLEQVKVLNVETREMVIDRVMELDEPALILEDLKWVILMVLFNAPGHESAYEQMEDLIFEQPEEGRLHS</sequence>
<feature type="chain" id="PRO_0000209181" description="Protein Smg homolog">
    <location>
        <begin position="1"/>
        <end position="158"/>
    </location>
</feature>
<organism>
    <name type="scientific">Shewanella oneidensis (strain ATCC 700550 / JCM 31522 / CIP 106686 / LMG 19005 / NCIMB 14063 / MR-1)</name>
    <dbReference type="NCBI Taxonomy" id="211586"/>
    <lineage>
        <taxon>Bacteria</taxon>
        <taxon>Pseudomonadati</taxon>
        <taxon>Pseudomonadota</taxon>
        <taxon>Gammaproteobacteria</taxon>
        <taxon>Alteromonadales</taxon>
        <taxon>Shewanellaceae</taxon>
        <taxon>Shewanella</taxon>
    </lineage>
</organism>
<reference key="1">
    <citation type="journal article" date="2002" name="Nat. Biotechnol.">
        <title>Genome sequence of the dissimilatory metal ion-reducing bacterium Shewanella oneidensis.</title>
        <authorList>
            <person name="Heidelberg J.F."/>
            <person name="Paulsen I.T."/>
            <person name="Nelson K.E."/>
            <person name="Gaidos E.J."/>
            <person name="Nelson W.C."/>
            <person name="Read T.D."/>
            <person name="Eisen J.A."/>
            <person name="Seshadri R."/>
            <person name="Ward N.L."/>
            <person name="Methe B.A."/>
            <person name="Clayton R.A."/>
            <person name="Meyer T."/>
            <person name="Tsapin A."/>
            <person name="Scott J."/>
            <person name="Beanan M.J."/>
            <person name="Brinkac L.M."/>
            <person name="Daugherty S.C."/>
            <person name="DeBoy R.T."/>
            <person name="Dodson R.J."/>
            <person name="Durkin A.S."/>
            <person name="Haft D.H."/>
            <person name="Kolonay J.F."/>
            <person name="Madupu R."/>
            <person name="Peterson J.D."/>
            <person name="Umayam L.A."/>
            <person name="White O."/>
            <person name="Wolf A.M."/>
            <person name="Vamathevan J.J."/>
            <person name="Weidman J.F."/>
            <person name="Impraim M."/>
            <person name="Lee K."/>
            <person name="Berry K.J."/>
            <person name="Lee C."/>
            <person name="Mueller J."/>
            <person name="Khouri H.M."/>
            <person name="Gill J."/>
            <person name="Utterback T.R."/>
            <person name="McDonald L.A."/>
            <person name="Feldblyum T.V."/>
            <person name="Smith H.O."/>
            <person name="Venter J.C."/>
            <person name="Nealson K.H."/>
            <person name="Fraser C.M."/>
        </authorList>
    </citation>
    <scope>NUCLEOTIDE SEQUENCE [LARGE SCALE GENOMIC DNA]</scope>
    <source>
        <strain>ATCC 700550 / JCM 31522 / CIP 106686 / LMG 19005 / NCIMB 14063 / MR-1</strain>
    </source>
</reference>
<keyword id="KW-1185">Reference proteome</keyword>
<protein>
    <recommendedName>
        <fullName evidence="1">Protein Smg homolog</fullName>
    </recommendedName>
</protein>
<evidence type="ECO:0000255" key="1">
    <source>
        <dbReference type="HAMAP-Rule" id="MF_00598"/>
    </source>
</evidence>
<accession>Q8EKQ5</accession>
<proteinExistence type="inferred from homology"/>
<gene>
    <name evidence="1" type="primary">smg</name>
    <name type="ordered locus">SO_0035</name>
</gene>
<comment type="similarity">
    <text evidence="1">Belongs to the Smg family.</text>
</comment>
<dbReference type="EMBL" id="AE014299">
    <property type="protein sequence ID" value="AAN53122.1"/>
    <property type="molecule type" value="Genomic_DNA"/>
</dbReference>
<dbReference type="RefSeq" id="NP_715677.1">
    <property type="nucleotide sequence ID" value="NC_004347.2"/>
</dbReference>
<dbReference type="RefSeq" id="WP_011070451.1">
    <property type="nucleotide sequence ID" value="NZ_CP053946.1"/>
</dbReference>
<dbReference type="SMR" id="Q8EKQ5"/>
<dbReference type="STRING" id="211586.SO_0035"/>
<dbReference type="PaxDb" id="211586-SO_0035"/>
<dbReference type="KEGG" id="son:SO_0035"/>
<dbReference type="PATRIC" id="fig|211586.12.peg.35"/>
<dbReference type="eggNOG" id="COG2922">
    <property type="taxonomic scope" value="Bacteria"/>
</dbReference>
<dbReference type="HOGENOM" id="CLU_133242_0_0_6"/>
<dbReference type="OrthoDB" id="9788984at2"/>
<dbReference type="PhylomeDB" id="Q8EKQ5"/>
<dbReference type="BioCyc" id="SONE211586:G1GMP-35-MONOMER"/>
<dbReference type="Proteomes" id="UP000008186">
    <property type="component" value="Chromosome"/>
</dbReference>
<dbReference type="HAMAP" id="MF_00598">
    <property type="entry name" value="Smg"/>
    <property type="match status" value="1"/>
</dbReference>
<dbReference type="InterPro" id="IPR007456">
    <property type="entry name" value="Smg"/>
</dbReference>
<dbReference type="NCBIfam" id="NF002897">
    <property type="entry name" value="PRK03430.1"/>
    <property type="match status" value="1"/>
</dbReference>
<dbReference type="PANTHER" id="PTHR38692">
    <property type="entry name" value="PROTEIN SMG"/>
    <property type="match status" value="1"/>
</dbReference>
<dbReference type="PANTHER" id="PTHR38692:SF1">
    <property type="entry name" value="PROTEIN SMG"/>
    <property type="match status" value="1"/>
</dbReference>
<dbReference type="Pfam" id="PF04361">
    <property type="entry name" value="DUF494"/>
    <property type="match status" value="1"/>
</dbReference>
<name>SMG_SHEON</name>